<sequence length="818" mass="87760">MEEKDESEQSISAGRQEIRKRRRPSQPMVDKSQQTEVTEKKKQLSIPQSSGPKAALSIGNIPGSKLNYECHRVSSQLQQTWIKRKRVQDMADKSLQTETIAEEKKEEIKLVCEAVVPEEKPAAVEVGPEFPESVREVEVPPNRYSVQVKIDRSQQTTCTGDWTMMNFPQKEKLDKEQQTYFSESEIVVIGWPTNSFSKSKEGAQKRKSSGNIFLSEHPEFQPTTSSNEEIRRPSISRTVSISPTKKDSPVPLEDEKDVPVEVQPPAAEEISAEEQLPLAETTSEEVPVAVQPPPAEEPPLEAQPSPTEEAPGDEAPAKVEPTPAEEALSEKPPAEEALVEIQPSPVEEAAGDEAPAKVEATSSEETLLKEPLTEVQPPAAEEAPIQDTPELQLSPAVEAPAEEAPAEAEPPPAEEAPAEEAPEVQSPPAEEAPAEEPPEIQSPPAEEAPAEEPPEVQSPPAEEAPAEEAPEVQSPPAEEAPAEEPPEVQSPPAEEVPAGEPPEVQSPPAEEAPAEEAPEVQSPPAEEVPAEEALAEVEPPPAEEAPAGEPSEVQSPPAEEAPAEEAPEVQSPPSEEAPAEEAPEVQSVPAGQAPAEEPLEVQPPPAEDATEEEASEVQSLPTDEAPAEEGLGFQSPPADKAPEEEAPEVQSPPAEEAPAEEPPEVQSLPADEAPAEEATEEVQSPPTEESPAEEAPAELQPPSTEETTSEMVSVEKQPSLTEEPFITPISLEETSAEVLLPPFEQTPADEALVENVSPVDQAPKEADVLVEKLESGNLDDKPKSEEPLERDTIPKDSSGTKNEGVSFEIKGVIHIELE</sequence>
<protein>
    <recommendedName>
        <fullName>Fibrous sheath CABYR-binding protein</fullName>
    </recommendedName>
</protein>
<organism>
    <name type="scientific">Bos taurus</name>
    <name type="common">Bovine</name>
    <dbReference type="NCBI Taxonomy" id="9913"/>
    <lineage>
        <taxon>Eukaryota</taxon>
        <taxon>Metazoa</taxon>
        <taxon>Chordata</taxon>
        <taxon>Craniata</taxon>
        <taxon>Vertebrata</taxon>
        <taxon>Euteleostomi</taxon>
        <taxon>Mammalia</taxon>
        <taxon>Eutheria</taxon>
        <taxon>Laurasiatheria</taxon>
        <taxon>Artiodactyla</taxon>
        <taxon>Ruminantia</taxon>
        <taxon>Pecora</taxon>
        <taxon>Bovidae</taxon>
        <taxon>Bovinae</taxon>
        <taxon>Bos</taxon>
    </lineage>
</organism>
<proteinExistence type="evidence at transcript level"/>
<name>FSCB_BOVIN</name>
<gene>
    <name evidence="3" type="primary">FSCB</name>
</gene>
<comment type="function">
    <text evidence="1">May be involved in the later stages of fibrous sheath biogenesis and spermatozoa capacitation. Inhibits ROPN1 and ROPN1L SUMOylation. Binds calcium.</text>
</comment>
<comment type="subunit">
    <text evidence="1">Interacts with CABYR. Interacts with ROPN1 and ROPN1L; the interaction increases upon spermatozoa capacitation conditions.</text>
</comment>
<comment type="subcellular location">
    <subcellularLocation>
        <location evidence="1">Cell projection</location>
        <location evidence="1">Cilium</location>
        <location evidence="1">Flagellum</location>
    </subcellularLocation>
    <text evidence="1">Localizes to cortex of the fibrous sheath including the surface of the longitudinal columns and ribs of the principal piece of sperm flagella.</text>
</comment>
<comment type="PTM">
    <text evidence="1">Phosphorylated by PKA upon spermatozoa capacitation conditions.</text>
</comment>
<evidence type="ECO:0000250" key="1">
    <source>
        <dbReference type="UniProtKB" id="A1EGX6"/>
    </source>
</evidence>
<evidence type="ECO:0000256" key="2">
    <source>
        <dbReference type="SAM" id="MobiDB-lite"/>
    </source>
</evidence>
<evidence type="ECO:0000312" key="3">
    <source>
        <dbReference type="EMBL" id="AAI11348.1"/>
    </source>
</evidence>
<dbReference type="EMBL" id="BC111347">
    <property type="protein sequence ID" value="AAI11348.1"/>
    <property type="molecule type" value="mRNA"/>
</dbReference>
<dbReference type="RefSeq" id="NP_001070014.1">
    <property type="nucleotide sequence ID" value="NM_001076546.2"/>
</dbReference>
<dbReference type="IntAct" id="Q2T9N0">
    <property type="interactions" value="1"/>
</dbReference>
<dbReference type="MINT" id="Q2T9N0"/>
<dbReference type="STRING" id="9913.ENSBTAP00000050184"/>
<dbReference type="PaxDb" id="9913-ENSBTAP00000050184"/>
<dbReference type="GeneID" id="767821"/>
<dbReference type="KEGG" id="bta:767821"/>
<dbReference type="CTD" id="84075"/>
<dbReference type="eggNOG" id="ENOG502S90R">
    <property type="taxonomic scope" value="Eukaryota"/>
</dbReference>
<dbReference type="InParanoid" id="Q2T9N0"/>
<dbReference type="OrthoDB" id="9838448at2759"/>
<dbReference type="Proteomes" id="UP000009136">
    <property type="component" value="Unplaced"/>
</dbReference>
<dbReference type="GO" id="GO:0035686">
    <property type="term" value="C:sperm fibrous sheath"/>
    <property type="evidence" value="ECO:0000318"/>
    <property type="project" value="GO_Central"/>
</dbReference>
<dbReference type="GO" id="GO:0097228">
    <property type="term" value="C:sperm principal piece"/>
    <property type="evidence" value="ECO:0000318"/>
    <property type="project" value="GO_Central"/>
</dbReference>
<dbReference type="GO" id="GO:0005509">
    <property type="term" value="F:calcium ion binding"/>
    <property type="evidence" value="ECO:0000318"/>
    <property type="project" value="GO_Central"/>
</dbReference>
<dbReference type="GO" id="GO:0033234">
    <property type="term" value="P:negative regulation of protein sumoylation"/>
    <property type="evidence" value="ECO:0000250"/>
    <property type="project" value="UniProtKB"/>
</dbReference>
<dbReference type="InterPro" id="IPR043375">
    <property type="entry name" value="FSCB"/>
</dbReference>
<dbReference type="PANTHER" id="PTHR36135">
    <property type="entry name" value="FIBROUS SHEATH CABYR-BINDING PROTEIN"/>
    <property type="match status" value="1"/>
</dbReference>
<dbReference type="PANTHER" id="PTHR36135:SF1">
    <property type="entry name" value="FIBROUS SHEATH CABYR-BINDING PROTEIN"/>
    <property type="match status" value="1"/>
</dbReference>
<keyword id="KW-0106">Calcium</keyword>
<keyword id="KW-0966">Cell projection</keyword>
<keyword id="KW-0969">Cilium</keyword>
<keyword id="KW-0282">Flagellum</keyword>
<keyword id="KW-0597">Phosphoprotein</keyword>
<keyword id="KW-1185">Reference proteome</keyword>
<accession>Q2T9N0</accession>
<reference evidence="3" key="1">
    <citation type="submission" date="2005-12" db="EMBL/GenBank/DDBJ databases">
        <authorList>
            <consortium name="NIH - Mammalian Gene Collection (MGC) project"/>
        </authorList>
    </citation>
    <scope>NUCLEOTIDE SEQUENCE [LARGE SCALE MRNA]</scope>
    <source>
        <strain evidence="3">Crossbred X Angus</strain>
        <tissue evidence="3">Liver</tissue>
    </source>
</reference>
<feature type="chain" id="PRO_0000331224" description="Fibrous sheath CABYR-binding protein">
    <location>
        <begin position="1"/>
        <end position="818"/>
    </location>
</feature>
<feature type="region of interest" description="Disordered" evidence="2">
    <location>
        <begin position="1"/>
        <end position="61"/>
    </location>
</feature>
<feature type="region of interest" description="Disordered" evidence="2">
    <location>
        <begin position="195"/>
        <end position="727"/>
    </location>
</feature>
<feature type="region of interest" description="Disordered" evidence="2">
    <location>
        <begin position="773"/>
        <end position="805"/>
    </location>
</feature>
<feature type="compositionally biased region" description="Low complexity" evidence="2">
    <location>
        <begin position="490"/>
        <end position="511"/>
    </location>
</feature>
<feature type="compositionally biased region" description="Low complexity" evidence="2">
    <location>
        <begin position="544"/>
        <end position="560"/>
    </location>
</feature>
<feature type="compositionally biased region" description="Low complexity" evidence="2">
    <location>
        <begin position="697"/>
        <end position="715"/>
    </location>
</feature>
<feature type="compositionally biased region" description="Basic and acidic residues" evidence="2">
    <location>
        <begin position="773"/>
        <end position="794"/>
    </location>
</feature>
<feature type="modified residue" description="Phosphoserine" evidence="1">
    <location>
        <position position="25"/>
    </location>
</feature>
<feature type="modified residue" description="Phosphoserine" evidence="1">
    <location>
        <position position="57"/>
    </location>
</feature>
<feature type="modified residue" description="Phosphoserine" evidence="1">
    <location>
        <position position="182"/>
    </location>
</feature>